<comment type="function">
    <text evidence="1">Functions in the N-end rule pathway of protein degradation where it conjugates Leu, Phe and, less efficiently, Met from aminoacyl-tRNAs to the N-termini of proteins containing an N-terminal arginine or lysine.</text>
</comment>
<comment type="catalytic activity">
    <reaction evidence="1">
        <text>N-terminal L-lysyl-[protein] + L-leucyl-tRNA(Leu) = N-terminal L-leucyl-L-lysyl-[protein] + tRNA(Leu) + H(+)</text>
        <dbReference type="Rhea" id="RHEA:12340"/>
        <dbReference type="Rhea" id="RHEA-COMP:9613"/>
        <dbReference type="Rhea" id="RHEA-COMP:9622"/>
        <dbReference type="Rhea" id="RHEA-COMP:12670"/>
        <dbReference type="Rhea" id="RHEA-COMP:12671"/>
        <dbReference type="ChEBI" id="CHEBI:15378"/>
        <dbReference type="ChEBI" id="CHEBI:65249"/>
        <dbReference type="ChEBI" id="CHEBI:78442"/>
        <dbReference type="ChEBI" id="CHEBI:78494"/>
        <dbReference type="ChEBI" id="CHEBI:133043"/>
        <dbReference type="EC" id="2.3.2.6"/>
    </reaction>
</comment>
<comment type="catalytic activity">
    <reaction evidence="1">
        <text>N-terminal L-arginyl-[protein] + L-leucyl-tRNA(Leu) = N-terminal L-leucyl-L-arginyl-[protein] + tRNA(Leu) + H(+)</text>
        <dbReference type="Rhea" id="RHEA:50416"/>
        <dbReference type="Rhea" id="RHEA-COMP:9613"/>
        <dbReference type="Rhea" id="RHEA-COMP:9622"/>
        <dbReference type="Rhea" id="RHEA-COMP:12672"/>
        <dbReference type="Rhea" id="RHEA-COMP:12673"/>
        <dbReference type="ChEBI" id="CHEBI:15378"/>
        <dbReference type="ChEBI" id="CHEBI:64719"/>
        <dbReference type="ChEBI" id="CHEBI:78442"/>
        <dbReference type="ChEBI" id="CHEBI:78494"/>
        <dbReference type="ChEBI" id="CHEBI:133044"/>
        <dbReference type="EC" id="2.3.2.6"/>
    </reaction>
</comment>
<comment type="catalytic activity">
    <reaction evidence="1">
        <text>L-phenylalanyl-tRNA(Phe) + an N-terminal L-alpha-aminoacyl-[protein] = an N-terminal L-phenylalanyl-L-alpha-aminoacyl-[protein] + tRNA(Phe)</text>
        <dbReference type="Rhea" id="RHEA:43632"/>
        <dbReference type="Rhea" id="RHEA-COMP:9668"/>
        <dbReference type="Rhea" id="RHEA-COMP:9699"/>
        <dbReference type="Rhea" id="RHEA-COMP:10636"/>
        <dbReference type="Rhea" id="RHEA-COMP:10637"/>
        <dbReference type="ChEBI" id="CHEBI:78442"/>
        <dbReference type="ChEBI" id="CHEBI:78531"/>
        <dbReference type="ChEBI" id="CHEBI:78597"/>
        <dbReference type="ChEBI" id="CHEBI:83561"/>
        <dbReference type="EC" id="2.3.2.6"/>
    </reaction>
</comment>
<comment type="subcellular location">
    <subcellularLocation>
        <location evidence="1">Cytoplasm</location>
    </subcellularLocation>
</comment>
<comment type="similarity">
    <text evidence="1">Belongs to the L/F-transferase family.</text>
</comment>
<feature type="chain" id="PRO_0000258090" description="Leucyl/phenylalanyl-tRNA--protein transferase">
    <location>
        <begin position="1"/>
        <end position="224"/>
    </location>
</feature>
<protein>
    <recommendedName>
        <fullName evidence="1">Leucyl/phenylalanyl-tRNA--protein transferase</fullName>
        <ecNumber evidence="1">2.3.2.6</ecNumber>
    </recommendedName>
    <alternativeName>
        <fullName evidence="1">L/F-transferase</fullName>
    </alternativeName>
    <alternativeName>
        <fullName evidence="1">Leucyltransferase</fullName>
    </alternativeName>
    <alternativeName>
        <fullName evidence="1">Phenyalanyltransferase</fullName>
    </alternativeName>
</protein>
<keyword id="KW-0012">Acyltransferase</keyword>
<keyword id="KW-0963">Cytoplasm</keyword>
<keyword id="KW-1185">Reference proteome</keyword>
<keyword id="KW-0808">Transferase</keyword>
<name>LFTR_RHOP2</name>
<dbReference type="EC" id="2.3.2.6" evidence="1"/>
<dbReference type="EMBL" id="CP000250">
    <property type="protein sequence ID" value="ABD07727.1"/>
    <property type="molecule type" value="Genomic_DNA"/>
</dbReference>
<dbReference type="RefSeq" id="WP_011441911.1">
    <property type="nucleotide sequence ID" value="NC_007778.1"/>
</dbReference>
<dbReference type="SMR" id="Q2IVN3"/>
<dbReference type="STRING" id="316058.RPB_3025"/>
<dbReference type="KEGG" id="rpb:RPB_3025"/>
<dbReference type="eggNOG" id="COG2360">
    <property type="taxonomic scope" value="Bacteria"/>
</dbReference>
<dbReference type="HOGENOM" id="CLU_075045_1_1_5"/>
<dbReference type="OrthoDB" id="9790282at2"/>
<dbReference type="Proteomes" id="UP000008809">
    <property type="component" value="Chromosome"/>
</dbReference>
<dbReference type="GO" id="GO:0005737">
    <property type="term" value="C:cytoplasm"/>
    <property type="evidence" value="ECO:0007669"/>
    <property type="project" value="UniProtKB-SubCell"/>
</dbReference>
<dbReference type="GO" id="GO:0008914">
    <property type="term" value="F:leucyl-tRNA--protein transferase activity"/>
    <property type="evidence" value="ECO:0007669"/>
    <property type="project" value="UniProtKB-UniRule"/>
</dbReference>
<dbReference type="GO" id="GO:0030163">
    <property type="term" value="P:protein catabolic process"/>
    <property type="evidence" value="ECO:0007669"/>
    <property type="project" value="UniProtKB-UniRule"/>
</dbReference>
<dbReference type="FunFam" id="3.40.630.70:FF:000001">
    <property type="entry name" value="Leucyl/phenylalanyl-tRNA--protein transferase"/>
    <property type="match status" value="1"/>
</dbReference>
<dbReference type="Gene3D" id="3.40.630.70">
    <property type="entry name" value="Leucyl/phenylalanyl-tRNA-protein transferase, C-terminal domain"/>
    <property type="match status" value="1"/>
</dbReference>
<dbReference type="Gene3D" id="3.30.70.3550">
    <property type="entry name" value="Leucyl/phenylalanyl-tRNA-protein transferase, N-terminal domain"/>
    <property type="match status" value="1"/>
</dbReference>
<dbReference type="HAMAP" id="MF_00688">
    <property type="entry name" value="Leu_Phe_trans"/>
    <property type="match status" value="1"/>
</dbReference>
<dbReference type="InterPro" id="IPR016181">
    <property type="entry name" value="Acyl_CoA_acyltransferase"/>
</dbReference>
<dbReference type="InterPro" id="IPR004616">
    <property type="entry name" value="Leu/Phe-tRNA_Trfase"/>
</dbReference>
<dbReference type="InterPro" id="IPR042203">
    <property type="entry name" value="Leu/Phe-tRNA_Trfase_C"/>
</dbReference>
<dbReference type="InterPro" id="IPR042221">
    <property type="entry name" value="Leu/Phe-tRNA_Trfase_N"/>
</dbReference>
<dbReference type="NCBIfam" id="TIGR00667">
    <property type="entry name" value="aat"/>
    <property type="match status" value="1"/>
</dbReference>
<dbReference type="PANTHER" id="PTHR30098">
    <property type="entry name" value="LEUCYL/PHENYLALANYL-TRNA--PROTEIN TRANSFERASE"/>
    <property type="match status" value="1"/>
</dbReference>
<dbReference type="PANTHER" id="PTHR30098:SF2">
    <property type="entry name" value="LEUCYL_PHENYLALANYL-TRNA--PROTEIN TRANSFERASE"/>
    <property type="match status" value="1"/>
</dbReference>
<dbReference type="Pfam" id="PF03588">
    <property type="entry name" value="Leu_Phe_trans"/>
    <property type="match status" value="1"/>
</dbReference>
<dbReference type="SUPFAM" id="SSF55729">
    <property type="entry name" value="Acyl-CoA N-acyltransferases (Nat)"/>
    <property type="match status" value="1"/>
</dbReference>
<accession>Q2IVN3</accession>
<reference key="1">
    <citation type="submission" date="2006-01" db="EMBL/GenBank/DDBJ databases">
        <title>Complete sequence of Rhodopseudomonas palustris HaA2.</title>
        <authorList>
            <consortium name="US DOE Joint Genome Institute"/>
            <person name="Copeland A."/>
            <person name="Lucas S."/>
            <person name="Lapidus A."/>
            <person name="Barry K."/>
            <person name="Detter J.C."/>
            <person name="Glavina T."/>
            <person name="Hammon N."/>
            <person name="Israni S."/>
            <person name="Pitluck S."/>
            <person name="Chain P."/>
            <person name="Malfatti S."/>
            <person name="Shin M."/>
            <person name="Vergez L."/>
            <person name="Schmutz J."/>
            <person name="Larimer F."/>
            <person name="Land M."/>
            <person name="Hauser L."/>
            <person name="Pelletier D.A."/>
            <person name="Kyrpides N."/>
            <person name="Anderson I."/>
            <person name="Oda Y."/>
            <person name="Harwood C.S."/>
            <person name="Richardson P."/>
        </authorList>
    </citation>
    <scope>NUCLEOTIDE SEQUENCE [LARGE SCALE GENOMIC DNA]</scope>
    <source>
        <strain>HaA2</strain>
    </source>
</reference>
<organism>
    <name type="scientific">Rhodopseudomonas palustris (strain HaA2)</name>
    <dbReference type="NCBI Taxonomy" id="316058"/>
    <lineage>
        <taxon>Bacteria</taxon>
        <taxon>Pseudomonadati</taxon>
        <taxon>Pseudomonadota</taxon>
        <taxon>Alphaproteobacteria</taxon>
        <taxon>Hyphomicrobiales</taxon>
        <taxon>Nitrobacteraceae</taxon>
        <taxon>Rhodopseudomonas</taxon>
    </lineage>
</organism>
<proteinExistence type="inferred from homology"/>
<evidence type="ECO:0000255" key="1">
    <source>
        <dbReference type="HAMAP-Rule" id="MF_00688"/>
    </source>
</evidence>
<gene>
    <name evidence="1" type="primary">aat</name>
    <name type="ordered locus">RPB_3025</name>
</gene>
<sequence length="224" mass="24490">MTSRDSAAAEITPEVLLRAYACGIFPMAESVDDPTLFWVEPELRGIIPLGGFRVASRLARTVRSDAFTVTVNRDFKGVIDGCAAPQPGRDDTWINRRIRELYIGLHGIGHCHSVEVWQDGDLAGGLYGVSLGRAFFGESMFHRARDASKVALVHLVARLLAGGYELLDTQFVTDHLRSFGAIEVPRQRYRSMLDDALQGIAAFDALPVDQPVTGAKALEIIAAH</sequence>